<protein>
    <recommendedName>
        <fullName>DNA-directed RNA polymerase I subunit rpa43</fullName>
        <shortName>RNA polymerase I subunit A43</shortName>
    </recommendedName>
    <alternativeName>
        <fullName>DNA-dependent RNA polymerase 19 kDa polypeptide</fullName>
    </alternativeName>
</protein>
<comment type="function">
    <text>DNA-dependent RNA polymerase catalyzes the transcription of DNA into RNA using the four ribonucleoside triphosphates as substrates. Component of RNA polymerase I which synthesizes ribosomal RNA precursors. May be involved in recruitment of Pol I to rDNA promoters.</text>
</comment>
<comment type="subunit">
    <text evidence="1 2">Component of the RNA polymerase I (Pol I) complex consisting of 14 subunits. Part of a Pol I subcomplex consisting of the subunits A14 and A43 (By similarity). Interacts with ker1/A14.</text>
</comment>
<comment type="subcellular location">
    <subcellularLocation>
        <location evidence="1">Nucleus</location>
        <location evidence="1">Nucleolus</location>
    </subcellularLocation>
</comment>
<comment type="PTM">
    <text evidence="1">Contains an average of four phosphates per molecule.</text>
</comment>
<comment type="similarity">
    <text evidence="3">Belongs to the eukaryotic RPA43 RNA polymerase subunit family.</text>
</comment>
<proteinExistence type="evidence at protein level"/>
<gene>
    <name type="primary">rpa43</name>
    <name type="synonym">rpa21</name>
    <name type="ORF">SPBC3B9.07c</name>
</gene>
<feature type="chain" id="PRO_0000073959" description="DNA-directed RNA polymerase I subunit rpa43">
    <location>
        <begin position="1"/>
        <end position="173"/>
    </location>
</feature>
<accession>O43036</accession>
<reference key="1">
    <citation type="journal article" date="1999" name="Bioorg. Khim.">
        <title>Characteristics of the cDNA of the Schizosaccharomyces pombe rpa43+ gene: structural similarity of the Rpa43 subunit of RNA-polymerase I with the Rpc25 subunit of RNA-polymerase III.</title>
        <authorList>
            <person name="Shpakovskii G.V."/>
            <person name="Shematorova E.K."/>
        </authorList>
    </citation>
    <scope>NUCLEOTIDE SEQUENCE [MRNA]</scope>
    <source>
        <strain>972 / ATCC 24843</strain>
    </source>
</reference>
<reference key="2">
    <citation type="journal article" date="2002" name="Nature">
        <title>The genome sequence of Schizosaccharomyces pombe.</title>
        <authorList>
            <person name="Wood V."/>
            <person name="Gwilliam R."/>
            <person name="Rajandream M.A."/>
            <person name="Lyne M.H."/>
            <person name="Lyne R."/>
            <person name="Stewart A."/>
            <person name="Sgouros J.G."/>
            <person name="Peat N."/>
            <person name="Hayles J."/>
            <person name="Baker S.G."/>
            <person name="Basham D."/>
            <person name="Bowman S."/>
            <person name="Brooks K."/>
            <person name="Brown D."/>
            <person name="Brown S."/>
            <person name="Chillingworth T."/>
            <person name="Churcher C.M."/>
            <person name="Collins M."/>
            <person name="Connor R."/>
            <person name="Cronin A."/>
            <person name="Davis P."/>
            <person name="Feltwell T."/>
            <person name="Fraser A."/>
            <person name="Gentles S."/>
            <person name="Goble A."/>
            <person name="Hamlin N."/>
            <person name="Harris D.E."/>
            <person name="Hidalgo J."/>
            <person name="Hodgson G."/>
            <person name="Holroyd S."/>
            <person name="Hornsby T."/>
            <person name="Howarth S."/>
            <person name="Huckle E.J."/>
            <person name="Hunt S."/>
            <person name="Jagels K."/>
            <person name="James K.D."/>
            <person name="Jones L."/>
            <person name="Jones M."/>
            <person name="Leather S."/>
            <person name="McDonald S."/>
            <person name="McLean J."/>
            <person name="Mooney P."/>
            <person name="Moule S."/>
            <person name="Mungall K.L."/>
            <person name="Murphy L.D."/>
            <person name="Niblett D."/>
            <person name="Odell C."/>
            <person name="Oliver K."/>
            <person name="O'Neil S."/>
            <person name="Pearson D."/>
            <person name="Quail M.A."/>
            <person name="Rabbinowitsch E."/>
            <person name="Rutherford K.M."/>
            <person name="Rutter S."/>
            <person name="Saunders D."/>
            <person name="Seeger K."/>
            <person name="Sharp S."/>
            <person name="Skelton J."/>
            <person name="Simmonds M.N."/>
            <person name="Squares R."/>
            <person name="Squares S."/>
            <person name="Stevens K."/>
            <person name="Taylor K."/>
            <person name="Taylor R.G."/>
            <person name="Tivey A."/>
            <person name="Walsh S.V."/>
            <person name="Warren T."/>
            <person name="Whitehead S."/>
            <person name="Woodward J.R."/>
            <person name="Volckaert G."/>
            <person name="Aert R."/>
            <person name="Robben J."/>
            <person name="Grymonprez B."/>
            <person name="Weltjens I."/>
            <person name="Vanstreels E."/>
            <person name="Rieger M."/>
            <person name="Schaefer M."/>
            <person name="Mueller-Auer S."/>
            <person name="Gabel C."/>
            <person name="Fuchs M."/>
            <person name="Duesterhoeft A."/>
            <person name="Fritzc C."/>
            <person name="Holzer E."/>
            <person name="Moestl D."/>
            <person name="Hilbert H."/>
            <person name="Borzym K."/>
            <person name="Langer I."/>
            <person name="Beck A."/>
            <person name="Lehrach H."/>
            <person name="Reinhardt R."/>
            <person name="Pohl T.M."/>
            <person name="Eger P."/>
            <person name="Zimmermann W."/>
            <person name="Wedler H."/>
            <person name="Wambutt R."/>
            <person name="Purnelle B."/>
            <person name="Goffeau A."/>
            <person name="Cadieu E."/>
            <person name="Dreano S."/>
            <person name="Gloux S."/>
            <person name="Lelaure V."/>
            <person name="Mottier S."/>
            <person name="Galibert F."/>
            <person name="Aves S.J."/>
            <person name="Xiang Z."/>
            <person name="Hunt C."/>
            <person name="Moore K."/>
            <person name="Hurst S.M."/>
            <person name="Lucas M."/>
            <person name="Rochet M."/>
            <person name="Gaillardin C."/>
            <person name="Tallada V.A."/>
            <person name="Garzon A."/>
            <person name="Thode G."/>
            <person name="Daga R.R."/>
            <person name="Cruzado L."/>
            <person name="Jimenez J."/>
            <person name="Sanchez M."/>
            <person name="del Rey F."/>
            <person name="Benito J."/>
            <person name="Dominguez A."/>
            <person name="Revuelta J.L."/>
            <person name="Moreno S."/>
            <person name="Armstrong J."/>
            <person name="Forsburg S.L."/>
            <person name="Cerutti L."/>
            <person name="Lowe T."/>
            <person name="McCombie W.R."/>
            <person name="Paulsen I."/>
            <person name="Potashkin J."/>
            <person name="Shpakovski G.V."/>
            <person name="Ussery D."/>
            <person name="Barrell B.G."/>
            <person name="Nurse P."/>
        </authorList>
    </citation>
    <scope>NUCLEOTIDE SEQUENCE [LARGE SCALE GENOMIC DNA]</scope>
    <source>
        <strain>972 / ATCC 24843</strain>
    </source>
</reference>
<reference key="3">
    <citation type="journal article" date="2005" name="J. Biol. Chem.">
        <title>The fission yeast protein Ker1p is an ortholog of RNA polymerase I subunit A14 in Saccharomyces cerevisiae and is required for stable association of Rrn3p and RPA21 in RNA polymerase I.</title>
        <authorList>
            <person name="Imazawa Y."/>
            <person name="Hisatake K."/>
            <person name="Mitsuzawa H."/>
            <person name="Matsumoto M."/>
            <person name="Tsukui T."/>
            <person name="Nakagawa K."/>
            <person name="Nakadai T."/>
            <person name="Shimada M."/>
            <person name="Ishihama A."/>
            <person name="Nogi Y."/>
        </authorList>
    </citation>
    <scope>INTERACTION WITH KER1</scope>
    <source>
        <strain>972 / ATCC 24843</strain>
    </source>
</reference>
<evidence type="ECO:0000250" key="1"/>
<evidence type="ECO:0000269" key="2">
    <source>
    </source>
</evidence>
<evidence type="ECO:0000305" key="3"/>
<organism>
    <name type="scientific">Schizosaccharomyces pombe (strain 972 / ATCC 24843)</name>
    <name type="common">Fission yeast</name>
    <dbReference type="NCBI Taxonomy" id="284812"/>
    <lineage>
        <taxon>Eukaryota</taxon>
        <taxon>Fungi</taxon>
        <taxon>Dikarya</taxon>
        <taxon>Ascomycota</taxon>
        <taxon>Taphrinomycotina</taxon>
        <taxon>Schizosaccharomycetes</taxon>
        <taxon>Schizosaccharomycetales</taxon>
        <taxon>Schizosaccharomycetaceae</taxon>
        <taxon>Schizosaccharomyces</taxon>
    </lineage>
</organism>
<name>RPA43_SCHPO</name>
<sequence length="173" mass="19385">MPDLSLYKQTVDLYLSIAPGHSRDPLNAIQEHMDSMILSKLPRINGIVLAYDNIRFLEKSAKVMYDSPFSFIWVRVDVLVFSPKKGDCLEGKINLVSPSHIGLLILGIFNASIPRKSIPKDWIFIEPDTTEEQGRWKTNDGNILEPGKDLEFVVDGIQREAGLTMVQGTLANS</sequence>
<keyword id="KW-0002">3D-structure</keyword>
<keyword id="KW-0240">DNA-directed RNA polymerase</keyword>
<keyword id="KW-0539">Nucleus</keyword>
<keyword id="KW-0597">Phosphoprotein</keyword>
<keyword id="KW-1185">Reference proteome</keyword>
<keyword id="KW-0804">Transcription</keyword>
<dbReference type="EMBL" id="AF129106">
    <property type="protein sequence ID" value="AAF40067.1"/>
    <property type="molecule type" value="mRNA"/>
</dbReference>
<dbReference type="EMBL" id="CU329671">
    <property type="protein sequence ID" value="CAA17787.1"/>
    <property type="molecule type" value="Genomic_DNA"/>
</dbReference>
<dbReference type="PIR" id="T40346">
    <property type="entry name" value="T40346"/>
</dbReference>
<dbReference type="RefSeq" id="NP_596665.1">
    <property type="nucleotide sequence ID" value="NM_001022587.2"/>
</dbReference>
<dbReference type="PDB" id="7AOC">
    <property type="method" value="EM"/>
    <property type="resolution" value="3.84 A"/>
    <property type="chains" value="G=1-173"/>
</dbReference>
<dbReference type="PDB" id="7AOD">
    <property type="method" value="EM"/>
    <property type="resolution" value="4.50 A"/>
    <property type="chains" value="G/S=1-173"/>
</dbReference>
<dbReference type="PDB" id="7AOE">
    <property type="method" value="EM"/>
    <property type="resolution" value="3.90 A"/>
    <property type="chains" value="G=1-173"/>
</dbReference>
<dbReference type="PDBsum" id="7AOC"/>
<dbReference type="PDBsum" id="7AOD"/>
<dbReference type="PDBsum" id="7AOE"/>
<dbReference type="EMDB" id="EMD-11840"/>
<dbReference type="EMDB" id="EMD-11841"/>
<dbReference type="EMDB" id="EMD-11842"/>
<dbReference type="SMR" id="O43036"/>
<dbReference type="BioGRID" id="277505">
    <property type="interactions" value="5"/>
</dbReference>
<dbReference type="ComplexPortal" id="CPX-8907">
    <property type="entry name" value="DNA-directed RNA polymerase I complex"/>
</dbReference>
<dbReference type="FunCoup" id="O43036">
    <property type="interactions" value="33"/>
</dbReference>
<dbReference type="STRING" id="284812.O43036"/>
<dbReference type="PaxDb" id="4896-SPBC3B9.07c.1"/>
<dbReference type="EnsemblFungi" id="SPBC3B9.07c.1">
    <property type="protein sequence ID" value="SPBC3B9.07c.1:pep"/>
    <property type="gene ID" value="SPBC3B9.07c"/>
</dbReference>
<dbReference type="GeneID" id="2540989"/>
<dbReference type="KEGG" id="spo:2540989"/>
<dbReference type="PomBase" id="SPBC3B9.07c">
    <property type="gene designation" value="rpa43"/>
</dbReference>
<dbReference type="VEuPathDB" id="FungiDB:SPBC3B9.07c"/>
<dbReference type="eggNOG" id="KOG4134">
    <property type="taxonomic scope" value="Eukaryota"/>
</dbReference>
<dbReference type="HOGENOM" id="CLU_105516_0_0_1"/>
<dbReference type="InParanoid" id="O43036"/>
<dbReference type="OMA" id="SKMPRIN"/>
<dbReference type="PhylomeDB" id="O43036"/>
<dbReference type="Reactome" id="R-SPO-73762">
    <property type="pathway name" value="RNA Polymerase I Transcription Initiation"/>
</dbReference>
<dbReference type="Reactome" id="R-SPO-73772">
    <property type="pathway name" value="RNA Polymerase I Promoter Escape"/>
</dbReference>
<dbReference type="PRO" id="PR:O43036"/>
<dbReference type="Proteomes" id="UP000002485">
    <property type="component" value="Chromosome II"/>
</dbReference>
<dbReference type="GO" id="GO:0005829">
    <property type="term" value="C:cytosol"/>
    <property type="evidence" value="ECO:0007005"/>
    <property type="project" value="PomBase"/>
</dbReference>
<dbReference type="GO" id="GO:0005730">
    <property type="term" value="C:nucleolus"/>
    <property type="evidence" value="ECO:0007005"/>
    <property type="project" value="PomBase"/>
</dbReference>
<dbReference type="GO" id="GO:0005634">
    <property type="term" value="C:nucleus"/>
    <property type="evidence" value="ECO:0007005"/>
    <property type="project" value="PomBase"/>
</dbReference>
<dbReference type="GO" id="GO:0005736">
    <property type="term" value="C:RNA polymerase I complex"/>
    <property type="evidence" value="ECO:0000314"/>
    <property type="project" value="PomBase"/>
</dbReference>
<dbReference type="GO" id="GO:0006362">
    <property type="term" value="P:transcription elongation by RNA polymerase I"/>
    <property type="evidence" value="ECO:0000269"/>
    <property type="project" value="PomBase"/>
</dbReference>
<dbReference type="GO" id="GO:0006361">
    <property type="term" value="P:transcription initiation at RNA polymerase I promoter"/>
    <property type="evidence" value="ECO:0000315"/>
    <property type="project" value="PomBase"/>
</dbReference>
<dbReference type="FunFam" id="3.30.1490.120:FF:000004">
    <property type="entry name" value="RNA polymerase I subunit Rpa43"/>
    <property type="match status" value="1"/>
</dbReference>
<dbReference type="Gene3D" id="2.40.50.1060">
    <property type="match status" value="1"/>
</dbReference>
<dbReference type="Gene3D" id="3.30.1490.120">
    <property type="entry name" value="RNA polymerase Rpb7-like, N-terminal domain"/>
    <property type="match status" value="1"/>
</dbReference>
<dbReference type="InterPro" id="IPR036898">
    <property type="entry name" value="RNA_pol_Rpb7-like_N_sf"/>
</dbReference>
<dbReference type="InterPro" id="IPR041178">
    <property type="entry name" value="RPA43_OB"/>
</dbReference>
<dbReference type="InterPro" id="IPR045113">
    <property type="entry name" value="Rpb7-like"/>
</dbReference>
<dbReference type="InterPro" id="IPR005576">
    <property type="entry name" value="Rpb7-like_N"/>
</dbReference>
<dbReference type="PANTHER" id="PTHR12709:SF5">
    <property type="entry name" value="DNA-DIRECTED RNA POLYMERASE I SUBUNIT RPA43"/>
    <property type="match status" value="1"/>
</dbReference>
<dbReference type="PANTHER" id="PTHR12709">
    <property type="entry name" value="DNA-DIRECTED RNA POLYMERASE II, III"/>
    <property type="match status" value="1"/>
</dbReference>
<dbReference type="Pfam" id="PF17875">
    <property type="entry name" value="RPA43_OB"/>
    <property type="match status" value="1"/>
</dbReference>
<dbReference type="Pfam" id="PF03876">
    <property type="entry name" value="SHS2_Rpb7-N"/>
    <property type="match status" value="1"/>
</dbReference>